<reference key="1">
    <citation type="submission" date="2008-10" db="EMBL/GenBank/DDBJ databases">
        <title>Genome sequence of Bacillus cereus G9842.</title>
        <authorList>
            <person name="Dodson R.J."/>
            <person name="Durkin A.S."/>
            <person name="Rosovitz M.J."/>
            <person name="Rasko D.A."/>
            <person name="Hoffmaster A."/>
            <person name="Ravel J."/>
            <person name="Sutton G."/>
        </authorList>
    </citation>
    <scope>NUCLEOTIDE SEQUENCE [LARGE SCALE GENOMIC DNA]</scope>
    <source>
        <strain>G9842</strain>
    </source>
</reference>
<name>CTAA_BACC2</name>
<protein>
    <recommendedName>
        <fullName evidence="1">Heme A synthase</fullName>
        <shortName evidence="1">HAS</shortName>
        <ecNumber evidence="1">1.17.99.9</ecNumber>
    </recommendedName>
    <alternativeName>
        <fullName evidence="1">Cytochrome aa3-controlling protein</fullName>
    </alternativeName>
</protein>
<sequence length="311" mass="34551">MQRFIKWLAVITSLDLLIVLLGGALVTKTGSGQGCGKSWPLCNGEFVPSNLSMETIIELSHRLTSGSAGILVTLLCILSWKYYKHVRETKTLAILSFVFLVAQALMGAAAVVWGQMPAVLAIHFGISLISFASVILLTCLIFEIDQKFDARSLIMDKKMKFHIYGVTIYSYIVVYTGALVRHERASLACPDFPLCSKNRPMPTQLHEWVQMGHRVAAMLIFAWILYAMILAIRHYKQQPVVYWGWIISFILVTLQAVVGVLVVFTNASLAMALLHSLFISCLFAVLCYLVMLGTRIKVNAKEAGSTSKQTK</sequence>
<organism>
    <name type="scientific">Bacillus cereus (strain G9842)</name>
    <dbReference type="NCBI Taxonomy" id="405531"/>
    <lineage>
        <taxon>Bacteria</taxon>
        <taxon>Bacillati</taxon>
        <taxon>Bacillota</taxon>
        <taxon>Bacilli</taxon>
        <taxon>Bacillales</taxon>
        <taxon>Bacillaceae</taxon>
        <taxon>Bacillus</taxon>
        <taxon>Bacillus cereus group</taxon>
    </lineage>
</organism>
<dbReference type="EC" id="1.17.99.9" evidence="1"/>
<dbReference type="EMBL" id="CP001186">
    <property type="protein sequence ID" value="ACK98061.1"/>
    <property type="molecule type" value="Genomic_DNA"/>
</dbReference>
<dbReference type="RefSeq" id="WP_001188741.1">
    <property type="nucleotide sequence ID" value="NC_011772.1"/>
</dbReference>
<dbReference type="SMR" id="B7IVI3"/>
<dbReference type="KEGG" id="bcg:BCG9842_B1191"/>
<dbReference type="HOGENOM" id="CLU_041525_3_1_9"/>
<dbReference type="UniPathway" id="UPA00269">
    <property type="reaction ID" value="UER00713"/>
</dbReference>
<dbReference type="Proteomes" id="UP000006744">
    <property type="component" value="Chromosome"/>
</dbReference>
<dbReference type="GO" id="GO:0005886">
    <property type="term" value="C:plasma membrane"/>
    <property type="evidence" value="ECO:0007669"/>
    <property type="project" value="UniProtKB-SubCell"/>
</dbReference>
<dbReference type="GO" id="GO:0046872">
    <property type="term" value="F:metal ion binding"/>
    <property type="evidence" value="ECO:0007669"/>
    <property type="project" value="UniProtKB-KW"/>
</dbReference>
<dbReference type="GO" id="GO:0016653">
    <property type="term" value="F:oxidoreductase activity, acting on NAD(P)H, heme protein as acceptor"/>
    <property type="evidence" value="ECO:0007669"/>
    <property type="project" value="InterPro"/>
</dbReference>
<dbReference type="GO" id="GO:0006784">
    <property type="term" value="P:heme A biosynthetic process"/>
    <property type="evidence" value="ECO:0007669"/>
    <property type="project" value="UniProtKB-UniRule"/>
</dbReference>
<dbReference type="HAMAP" id="MF_01664">
    <property type="entry name" value="HemeA_synth_type1"/>
    <property type="match status" value="1"/>
</dbReference>
<dbReference type="InterPro" id="IPR003780">
    <property type="entry name" value="COX15/CtaA_fam"/>
</dbReference>
<dbReference type="InterPro" id="IPR050450">
    <property type="entry name" value="COX15/CtaA_HemeA_synthase"/>
</dbReference>
<dbReference type="InterPro" id="IPR023755">
    <property type="entry name" value="HemeA_Synthase_type1"/>
</dbReference>
<dbReference type="PANTHER" id="PTHR35457">
    <property type="entry name" value="HEME A SYNTHASE"/>
    <property type="match status" value="1"/>
</dbReference>
<dbReference type="PANTHER" id="PTHR35457:SF1">
    <property type="entry name" value="HEME A SYNTHASE"/>
    <property type="match status" value="1"/>
</dbReference>
<dbReference type="Pfam" id="PF02628">
    <property type="entry name" value="COX15-CtaA"/>
    <property type="match status" value="1"/>
</dbReference>
<proteinExistence type="inferred from homology"/>
<evidence type="ECO:0000255" key="1">
    <source>
        <dbReference type="HAMAP-Rule" id="MF_01664"/>
    </source>
</evidence>
<comment type="function">
    <text evidence="1">Catalyzes the conversion of heme O to heme A by two successive hydroxylations of the methyl group at C8. The first hydroxylation forms heme I, the second hydroxylation results in an unstable dihydroxymethyl group, which spontaneously dehydrates, resulting in the formyl group of heme A.</text>
</comment>
<comment type="catalytic activity">
    <reaction evidence="1">
        <text>Fe(II)-heme o + 2 A + H2O = Fe(II)-heme a + 2 AH2</text>
        <dbReference type="Rhea" id="RHEA:63388"/>
        <dbReference type="ChEBI" id="CHEBI:13193"/>
        <dbReference type="ChEBI" id="CHEBI:15377"/>
        <dbReference type="ChEBI" id="CHEBI:17499"/>
        <dbReference type="ChEBI" id="CHEBI:60530"/>
        <dbReference type="ChEBI" id="CHEBI:61715"/>
        <dbReference type="EC" id="1.17.99.9"/>
    </reaction>
    <physiologicalReaction direction="left-to-right" evidence="1">
        <dbReference type="Rhea" id="RHEA:63389"/>
    </physiologicalReaction>
</comment>
<comment type="cofactor">
    <cofactor evidence="1">
        <name>heme b</name>
        <dbReference type="ChEBI" id="CHEBI:60344"/>
    </cofactor>
</comment>
<comment type="pathway">
    <text evidence="1">Porphyrin-containing compound metabolism; heme A biosynthesis; heme A from heme O: step 1/1.</text>
</comment>
<comment type="subunit">
    <text evidence="1">Interacts with CtaB.</text>
</comment>
<comment type="subcellular location">
    <subcellularLocation>
        <location evidence="1">Cell membrane</location>
        <topology evidence="1">Multi-pass membrane protein</topology>
    </subcellularLocation>
</comment>
<comment type="domain">
    <text evidence="1">The N-half (TM1-TM4) and C-half (TM5-TM8) domains are connected by an intracellular loop. Each domain is formed from four-helix bundles and they align in a pseudo twofold symmetry manner. The N-half domain is the substrate-heme O binding domain and the C-half domain is the cofactor heme B binding domain.</text>
</comment>
<comment type="domain">
    <text evidence="1">The cysteines of disulfide bond Cys-35 and Cys-42 may be involved in transfer of reducing equivalents from quinol in the membrane to the active site of the enzyme.</text>
</comment>
<comment type="similarity">
    <text evidence="1">Belongs to the COX15/CtaA family. Type 1 subfamily.</text>
</comment>
<accession>B7IVI3</accession>
<feature type="chain" id="PRO_1000187237" description="Heme A synthase">
    <location>
        <begin position="1"/>
        <end position="311"/>
    </location>
</feature>
<feature type="topological domain" description="Cytoplasmic" evidence="1">
    <location>
        <begin position="1"/>
        <end position="6"/>
    </location>
</feature>
<feature type="transmembrane region" description="Helical" evidence="1">
    <location>
        <begin position="7"/>
        <end position="27"/>
    </location>
</feature>
<feature type="topological domain" description="Extracellular" evidence="1">
    <location>
        <begin position="28"/>
        <end position="62"/>
    </location>
</feature>
<feature type="transmembrane region" description="Helical" evidence="1">
    <location>
        <begin position="63"/>
        <end position="83"/>
    </location>
</feature>
<feature type="topological domain" description="Cytoplasmic" evidence="1">
    <location>
        <begin position="84"/>
        <end position="91"/>
    </location>
</feature>
<feature type="transmembrane region" description="Helical" evidence="1">
    <location>
        <begin position="92"/>
        <end position="112"/>
    </location>
</feature>
<feature type="topological domain" description="Extracellular" evidence="1">
    <location>
        <begin position="113"/>
        <end position="121"/>
    </location>
</feature>
<feature type="transmembrane region" description="Helical" evidence="1">
    <location>
        <begin position="122"/>
        <end position="142"/>
    </location>
</feature>
<feature type="topological domain" description="Cytoplasmic" evidence="1">
    <location>
        <begin position="143"/>
        <end position="159"/>
    </location>
</feature>
<feature type="transmembrane region" description="Helical" evidence="1">
    <location>
        <begin position="160"/>
        <end position="180"/>
    </location>
</feature>
<feature type="topological domain" description="Extracellular" evidence="1">
    <location>
        <begin position="181"/>
        <end position="211"/>
    </location>
</feature>
<feature type="transmembrane region" description="Helical" evidence="1">
    <location>
        <begin position="212"/>
        <end position="232"/>
    </location>
</feature>
<feature type="topological domain" description="Cytoplasmic" evidence="1">
    <location>
        <begin position="233"/>
        <end position="243"/>
    </location>
</feature>
<feature type="transmembrane region" description="Helical" evidence="1">
    <location>
        <begin position="244"/>
        <end position="264"/>
    </location>
</feature>
<feature type="topological domain" description="Extracellular" evidence="1">
    <location>
        <begin position="265"/>
        <end position="271"/>
    </location>
</feature>
<feature type="transmembrane region" description="Helical" evidence="1">
    <location>
        <begin position="272"/>
        <end position="292"/>
    </location>
</feature>
<feature type="topological domain" description="Cytoplasmic" evidence="1">
    <location>
        <begin position="293"/>
        <end position="311"/>
    </location>
</feature>
<feature type="active site" evidence="1">
    <location>
        <position position="58"/>
    </location>
</feature>
<feature type="binding site" description="axial binding residue" evidence="1">
    <location>
        <position position="61"/>
    </location>
    <ligand>
        <name>heme o</name>
        <dbReference type="ChEBI" id="CHEBI:24480"/>
    </ligand>
    <ligandPart>
        <name>Fe</name>
        <dbReference type="ChEBI" id="CHEBI:18248"/>
    </ligandPart>
</feature>
<feature type="binding site" description="axial binding residue" evidence="1">
    <location>
        <position position="123"/>
    </location>
    <ligand>
        <name>heme o</name>
        <dbReference type="ChEBI" id="CHEBI:24480"/>
    </ligand>
    <ligandPart>
        <name>Fe</name>
        <dbReference type="ChEBI" id="CHEBI:18248"/>
    </ligandPart>
</feature>
<feature type="binding site" description="axial binding residue" evidence="1">
    <location>
        <position position="213"/>
    </location>
    <ligand>
        <name>heme b</name>
        <dbReference type="ChEBI" id="CHEBI:60344"/>
    </ligand>
    <ligandPart>
        <name>Fe</name>
        <dbReference type="ChEBI" id="CHEBI:18248"/>
    </ligandPart>
</feature>
<feature type="binding site" description="axial binding residue" evidence="1">
    <location>
        <position position="275"/>
    </location>
    <ligand>
        <name>heme b</name>
        <dbReference type="ChEBI" id="CHEBI:60344"/>
    </ligand>
    <ligandPart>
        <name>Fe</name>
        <dbReference type="ChEBI" id="CHEBI:18248"/>
    </ligandPart>
</feature>
<feature type="disulfide bond" description="Essential for catalytic activity" evidence="1">
    <location>
        <begin position="35"/>
        <end position="42"/>
    </location>
</feature>
<feature type="disulfide bond" evidence="1">
    <location>
        <begin position="189"/>
        <end position="195"/>
    </location>
</feature>
<gene>
    <name evidence="1" type="primary">ctaA</name>
    <name type="ordered locus">BCG9842_B1191</name>
</gene>
<keyword id="KW-1003">Cell membrane</keyword>
<keyword id="KW-1015">Disulfide bond</keyword>
<keyword id="KW-0350">Heme biosynthesis</keyword>
<keyword id="KW-0408">Iron</keyword>
<keyword id="KW-0472">Membrane</keyword>
<keyword id="KW-0479">Metal-binding</keyword>
<keyword id="KW-0560">Oxidoreductase</keyword>
<keyword id="KW-0812">Transmembrane</keyword>
<keyword id="KW-1133">Transmembrane helix</keyword>